<dbReference type="GO" id="GO:0031012">
    <property type="term" value="C:extracellular matrix"/>
    <property type="evidence" value="ECO:0007669"/>
    <property type="project" value="TreeGrafter"/>
</dbReference>
<dbReference type="GO" id="GO:0005615">
    <property type="term" value="C:extracellular space"/>
    <property type="evidence" value="ECO:0007669"/>
    <property type="project" value="TreeGrafter"/>
</dbReference>
<dbReference type="GO" id="GO:0030020">
    <property type="term" value="F:extracellular matrix structural constituent conferring tensile strength"/>
    <property type="evidence" value="ECO:0007669"/>
    <property type="project" value="TreeGrafter"/>
</dbReference>
<dbReference type="GO" id="GO:0030198">
    <property type="term" value="P:extracellular matrix organization"/>
    <property type="evidence" value="ECO:0007669"/>
    <property type="project" value="TreeGrafter"/>
</dbReference>
<dbReference type="InterPro" id="IPR008160">
    <property type="entry name" value="Collagen"/>
</dbReference>
<dbReference type="InterPro" id="IPR050149">
    <property type="entry name" value="Collagen_superfamily"/>
</dbReference>
<dbReference type="PANTHER" id="PTHR24023:SF1112">
    <property type="entry name" value="COL_CUTICLE_N DOMAIN-CONTAINING PROTEIN-RELATED"/>
    <property type="match status" value="1"/>
</dbReference>
<dbReference type="PANTHER" id="PTHR24023">
    <property type="entry name" value="COLLAGEN ALPHA"/>
    <property type="match status" value="1"/>
</dbReference>
<dbReference type="Pfam" id="PF01391">
    <property type="entry name" value="Collagen"/>
    <property type="match status" value="11"/>
</dbReference>
<sequence length="1021" mass="90867">DEKSAGGISVPGPMGPSGPRGLPGPPGAPGPQGFQGPPGEPGEPGASGPMGPRGPPGPPGKNGDDGEAGKPGRPGERGPPGPQGARGLPGTAGLPGMKGHRGFSGLDGAKGDAGPAGPKGEPGSPGENGAPGQMGPRGLPGERGRPGASGPAGARGNDGATGAAGPPGPTGPAGPPGFPGAVGAKGEAGPQGARGSEGPQGVRGEPGPPGPAGAAGPAGNPGADGQPGAKGANGAPGIAGAPGFPGARGPSGPQGPSGAPGPKGNSGEPGAPGNKGDTGAKGEPGPTGIQGPPGPAGEEGKRGARGEPGPTGLPGPPGERGGPGSRGFPGADGIAGPKGPAGERGSPGPAGPKGSPGEAGRPGEAGLPGAKGLTGSPGSPGPDGKTGPPGPAGQDGRPGPAGPPGARGQAGVMGFPGPKGAAGEPGKAGERGVPGPPGAVGPAGKDGEAGAQGPPGPAGPAGERGEQGPAGPGFQGLPGPAGPPGEAGKPGEQGVPGDLGAPGPSGARGERGFPGERGVQGPPGPAGPRGNGAPGNDGAKGDAGAPGAPGSQGAPGLQGMPGERGAAGLPGPKGDRGDAGPKGADGAPGKDGVRGLTGPIGPPGPAGATGDKGEAGPSGPAGPTGARGAPGDRGEPGPPGPAGFAGPPGADGQPGAKGEPGDAGAKGDAGPSGPAGPTGPPGPIGNVGAPGPKGARGSAGPPGATGFPGAAGRVGPPGPSGNAGPPGPPGPVGKEGGKGPRGETGPAGRPGEVGPPGPPGPSGEKGSPGADGPAGAPGTPGPQGIGQRGVVGLPGQRGERGFPGLPGPSGEPGKQGPSGSSGERGPPGPMGPPGLAGPPGEAGREGSPGAEGSPGRDGSPGPKGDRGETGPGPPGAPGAPGAPGPVGPAGKSGDRGETGPSGPAGPAGPAGARGPAGPQGPRGDKGETGEQGDRGIKGHRGFSGLQGPAGPPGSPGEQGPSGASGPAGPRGPPGSAGTPGKDGLNGLPGPIGPPGPRGRTGDAGPVGPPGPPGPPGPPGPP</sequence>
<name>CO1A1_DOESX</name>
<comment type="function">
    <text evidence="8">Type I collagen is a member of group I collagen (fibrillar forming collagen).</text>
</comment>
<comment type="subunit">
    <text evidence="8">Trimers of one alpha 2(I) and two alpha 1(I) chains.</text>
</comment>
<comment type="subcellular location">
    <subcellularLocation>
        <location>Secreted</location>
    </subcellularLocation>
    <subcellularLocation>
        <location>Secreted</location>
        <location>Extracellular space</location>
    </subcellularLocation>
    <subcellularLocation>
        <location evidence="8">Secreted</location>
        <location evidence="8">Extracellular space</location>
        <location evidence="8">Extracellular matrix</location>
    </subcellularLocation>
</comment>
<comment type="tissue specificity">
    <text evidence="6">Expressed in bones.</text>
</comment>
<comment type="PTM">
    <text evidence="1">Contains mostly 4-hydroxyproline. Proline residues at the third position of the tripeptide repeating unit (G-X-Y) are hydroxylated in some or all of the chains.</text>
</comment>
<comment type="PTM">
    <text evidence="4">Contains 3-hydroxyproline at a few sites. This modification occurs on the first proline residue in the sequence motif Gly-Pro-Hyp, where Hyp is 4-hydroxyproline.</text>
</comment>
<comment type="PTM">
    <text evidence="1">Lysine residues at the third position of the tripeptide repeating unit (G-X-Y) are 5-hydroxylated in some or all of the chains.</text>
</comment>
<comment type="PTM">
    <text evidence="1">O-glycosylated on hydroxylated lysine residues. The O-linked glycan consists of a Glc-Gal disaccharide.</text>
</comment>
<comment type="miscellaneous">
    <text evidence="6">These protein fragments were extracted from an ancient scute bone collected in Buenos Aires in Argentina.</text>
</comment>
<comment type="similarity">
    <text evidence="8">Belongs to the fibrillar collagen family.</text>
</comment>
<evidence type="ECO:0000250" key="1">
    <source>
        <dbReference type="UniProtKB" id="P02452"/>
    </source>
</evidence>
<evidence type="ECO:0000250" key="2">
    <source>
        <dbReference type="UniProtKB" id="P02454"/>
    </source>
</evidence>
<evidence type="ECO:0000250" key="3">
    <source>
        <dbReference type="UniProtKB" id="P02457"/>
    </source>
</evidence>
<evidence type="ECO:0000250" key="4">
    <source>
        <dbReference type="UniProtKB" id="P11087"/>
    </source>
</evidence>
<evidence type="ECO:0000256" key="5">
    <source>
        <dbReference type="SAM" id="MobiDB-lite"/>
    </source>
</evidence>
<evidence type="ECO:0000269" key="6">
    <source>
    </source>
</evidence>
<evidence type="ECO:0000303" key="7">
    <source>
    </source>
</evidence>
<evidence type="ECO:0000305" key="8"/>
<reference evidence="8" key="1">
    <citation type="journal article" date="2019" name="Nat. Ecol. Evol.">
        <title>Palaeoproteomics resolves sloth relationships.</title>
        <authorList>
            <person name="Presslee S."/>
            <person name="Slater G.J."/>
            <person name="Pujos F."/>
            <person name="Forasiepi A.M."/>
            <person name="Fischer R."/>
            <person name="Molloy K."/>
            <person name="Mackie M."/>
            <person name="Olsen J.V."/>
            <person name="Kramarz A."/>
            <person name="Taglioretti M."/>
            <person name="Scaglia F."/>
            <person name="Lezcano M."/>
            <person name="Lanata J.L."/>
            <person name="Southon J."/>
            <person name="Feranec R."/>
            <person name="Bloch J."/>
            <person name="Hajduk A."/>
            <person name="Martin F.M."/>
            <person name="Salas Gismondi R."/>
            <person name="Reguero M."/>
            <person name="de Muizon C."/>
            <person name="Greenwood A."/>
            <person name="Chait B.T."/>
            <person name="Penkman K."/>
            <person name="Collins M."/>
            <person name="MacPhee R.D.E."/>
        </authorList>
    </citation>
    <scope>PROTEIN SEQUENCE</scope>
    <scope>TISSUE SPECIFICITY</scope>
    <scope>IDENTIFICATION BY MASS SPECTROMETRY</scope>
    <source>
        <tissue evidence="7">Bone</tissue>
    </source>
</reference>
<protein>
    <recommendedName>
        <fullName evidence="7">Collagen alpha-1(I) chain</fullName>
    </recommendedName>
    <alternativeName>
        <fullName evidence="1">Alpha-1 type I collagen</fullName>
    </alternativeName>
</protein>
<accession>C0HLI1</accession>
<organism evidence="7">
    <name type="scientific">Doedicurus sp.</name>
    <name type="common">South American giant glyptodont</name>
    <dbReference type="NCBI Taxonomy" id="1849957"/>
    <lineage>
        <taxon>Eukaryota</taxon>
        <taxon>Metazoa</taxon>
        <taxon>Chordata</taxon>
        <taxon>Craniata</taxon>
        <taxon>Vertebrata</taxon>
        <taxon>Euteleostomi</taxon>
        <taxon>Mammalia</taxon>
        <taxon>Eutheria</taxon>
        <taxon>Xenarthra</taxon>
        <taxon>Cingulata</taxon>
        <taxon>Chlamyphoridae</taxon>
        <taxon>Doedicurus</taxon>
    </lineage>
</organism>
<feature type="chain" id="PRO_0000448462" description="Collagen alpha-1(I) chain">
    <location>
        <begin position="1"/>
        <end position="1021"/>
    </location>
</feature>
<feature type="region of interest" description="Disordered" evidence="5">
    <location>
        <begin position="1"/>
        <end position="1021"/>
    </location>
</feature>
<feature type="compositionally biased region" description="Low complexity" evidence="5">
    <location>
        <begin position="31"/>
        <end position="50"/>
    </location>
</feature>
<feature type="compositionally biased region" description="Basic and acidic residues" evidence="5">
    <location>
        <begin position="62"/>
        <end position="76"/>
    </location>
</feature>
<feature type="compositionally biased region" description="Low complexity" evidence="5">
    <location>
        <begin position="112"/>
        <end position="128"/>
    </location>
</feature>
<feature type="compositionally biased region" description="Low complexity" evidence="5">
    <location>
        <begin position="146"/>
        <end position="164"/>
    </location>
</feature>
<feature type="compositionally biased region" description="Pro residues" evidence="5">
    <location>
        <begin position="166"/>
        <end position="178"/>
    </location>
</feature>
<feature type="compositionally biased region" description="Low complexity" evidence="5">
    <location>
        <begin position="212"/>
        <end position="262"/>
    </location>
</feature>
<feature type="compositionally biased region" description="Gly residues" evidence="5">
    <location>
        <begin position="318"/>
        <end position="327"/>
    </location>
</feature>
<feature type="compositionally biased region" description="Low complexity" evidence="5">
    <location>
        <begin position="371"/>
        <end position="425"/>
    </location>
</feature>
<feature type="compositionally biased region" description="Low complexity" evidence="5">
    <location>
        <begin position="484"/>
        <end position="493"/>
    </location>
</feature>
<feature type="compositionally biased region" description="Low complexity" evidence="5">
    <location>
        <begin position="536"/>
        <end position="558"/>
    </location>
</feature>
<feature type="compositionally biased region" description="Low complexity" evidence="5">
    <location>
        <begin position="615"/>
        <end position="629"/>
    </location>
</feature>
<feature type="compositionally biased region" description="Low complexity" evidence="5">
    <location>
        <begin position="642"/>
        <end position="672"/>
    </location>
</feature>
<feature type="compositionally biased region" description="Low complexity" evidence="5">
    <location>
        <begin position="698"/>
        <end position="714"/>
    </location>
</feature>
<feature type="compositionally biased region" description="Low complexity" evidence="5">
    <location>
        <begin position="743"/>
        <end position="752"/>
    </location>
</feature>
<feature type="compositionally biased region" description="Low complexity" evidence="5">
    <location>
        <begin position="762"/>
        <end position="777"/>
    </location>
</feature>
<feature type="compositionally biased region" description="Pro residues" evidence="5">
    <location>
        <begin position="826"/>
        <end position="836"/>
    </location>
</feature>
<feature type="compositionally biased region" description="Low complexity" evidence="5">
    <location>
        <begin position="838"/>
        <end position="853"/>
    </location>
</feature>
<feature type="compositionally biased region" description="Pro residues" evidence="5">
    <location>
        <begin position="871"/>
        <end position="886"/>
    </location>
</feature>
<feature type="compositionally biased region" description="Low complexity" evidence="5">
    <location>
        <begin position="907"/>
        <end position="921"/>
    </location>
</feature>
<feature type="compositionally biased region" description="Basic and acidic residues" evidence="5">
    <location>
        <begin position="922"/>
        <end position="936"/>
    </location>
</feature>
<feature type="compositionally biased region" description="Low complexity" evidence="5">
    <location>
        <begin position="955"/>
        <end position="988"/>
    </location>
</feature>
<feature type="compositionally biased region" description="Pro residues" evidence="5">
    <location>
        <begin position="1006"/>
        <end position="1021"/>
    </location>
</feature>
<feature type="modified residue" description="Allysine" evidence="1">
    <location>
        <position position="3"/>
    </location>
</feature>
<feature type="modified residue" description="Phosphoserine" evidence="2">
    <location>
        <position position="4"/>
    </location>
</feature>
<feature type="modified residue" description="4-hydroxyproline" evidence="3">
    <location>
        <position position="23"/>
    </location>
</feature>
<feature type="modified residue" description="4-hydroxyproline" evidence="3">
    <location>
        <position position="26"/>
    </location>
</feature>
<feature type="modified residue" description="4-hydroxyproline" evidence="3">
    <location>
        <position position="29"/>
    </location>
</feature>
<feature type="modified residue" description="4-hydroxyproline" evidence="3">
    <location>
        <position position="38"/>
    </location>
</feature>
<feature type="modified residue" description="4-hydroxyproline" evidence="3">
    <location>
        <position position="41"/>
    </location>
</feature>
<feature type="modified residue" description="4-hydroxyproline" evidence="3">
    <location>
        <position position="44"/>
    </location>
</feature>
<feature type="modified residue" description="4-hydroxyproline" evidence="3">
    <location>
        <position position="59"/>
    </location>
</feature>
<feature type="modified residue" description="4-hydroxyproline" evidence="3">
    <location>
        <position position="74"/>
    </location>
</feature>
<feature type="modified residue" description="4-hydroxyproline" evidence="3">
    <location>
        <position position="80"/>
    </location>
</feature>
<feature type="modified residue" description="4-hydroxyproline" evidence="3">
    <location>
        <position position="89"/>
    </location>
</feature>
<feature type="modified residue" description="4-hydroxyproline" evidence="3">
    <location>
        <position position="95"/>
    </location>
</feature>
<feature type="modified residue" description="5-hydroxylysine; alternate" evidence="1">
    <location>
        <position position="98"/>
    </location>
</feature>
<feature type="modified residue" description="Phosphoserine" evidence="2">
    <location>
        <position position="104"/>
    </location>
</feature>
<feature type="modified residue" description="4-hydroxyproline" evidence="3">
    <location>
        <position position="122"/>
    </location>
</feature>
<feature type="modified residue" description="4-hydroxyproline" evidence="3">
    <location>
        <position position="125"/>
    </location>
</feature>
<feature type="modified residue" description="4-hydroxyproline" evidence="3">
    <location>
        <position position="131"/>
    </location>
</feature>
<feature type="modified residue" description="4-hydroxyproline" evidence="3">
    <location>
        <position position="140"/>
    </location>
</feature>
<feature type="modified residue" description="4-hydroxyproline" evidence="3">
    <location>
        <position position="146"/>
    </location>
</feature>
<feature type="modified residue" description="4-hydroxyproline" evidence="3">
    <location>
        <position position="167"/>
    </location>
</feature>
<feature type="modified residue" description="4-hydroxyproline" evidence="3">
    <location>
        <position position="176"/>
    </location>
</feature>
<feature type="modified residue" description="4-hydroxyproline" evidence="3">
    <location>
        <position position="179"/>
    </location>
</feature>
<feature type="modified residue" description="4-hydroxyproline" evidence="3">
    <location>
        <position position="206"/>
    </location>
</feature>
<feature type="modified residue" description="4-hydroxyproline" evidence="3">
    <location>
        <position position="209"/>
    </location>
</feature>
<feature type="modified residue" description="4-hydroxyproline" evidence="3">
    <location>
        <position position="221"/>
    </location>
</feature>
<feature type="modified residue" description="4-hydroxyproline" evidence="3">
    <location>
        <position position="227"/>
    </location>
</feature>
<feature type="modified residue" description="4-hydroxyproline" evidence="3">
    <location>
        <position position="236"/>
    </location>
</feature>
<feature type="modified residue" description="4-hydroxyproline" evidence="3">
    <location>
        <position position="242"/>
    </location>
</feature>
<feature type="modified residue" description="4-hydroxyproline" evidence="3">
    <location>
        <position position="245"/>
    </location>
</feature>
<feature type="modified residue" description="4-hydroxyproline" evidence="3">
    <location>
        <position position="260"/>
    </location>
</feature>
<feature type="modified residue" description="5-hydroxylysine" evidence="3">
    <location>
        <position position="263"/>
    </location>
</feature>
<feature type="modified residue" description="4-hydroxyproline" evidence="3">
    <location>
        <position position="269"/>
    </location>
</feature>
<feature type="modified residue" description="4-hydroxyproline" evidence="3">
    <location>
        <position position="272"/>
    </location>
</feature>
<feature type="modified residue" description="4-hydroxyproline" evidence="3">
    <location>
        <position position="284"/>
    </location>
</feature>
<feature type="modified residue" description="4-hydroxyproline" evidence="3">
    <location>
        <position position="293"/>
    </location>
</feature>
<feature type="modified residue" description="4-hydroxyproline" evidence="3">
    <location>
        <position position="308"/>
    </location>
</feature>
<feature type="modified residue" description="4-hydroxyproline" evidence="3">
    <location>
        <position position="314"/>
    </location>
</feature>
<feature type="modified residue" description="4-hydroxyproline" evidence="3">
    <location>
        <position position="323"/>
    </location>
</feature>
<feature type="modified residue" description="4-hydroxyproline" evidence="3">
    <location>
        <position position="329"/>
    </location>
</feature>
<feature type="modified residue" description="5-hydroxylysine" evidence="3">
    <location>
        <position position="338"/>
    </location>
</feature>
<feature type="modified residue" description="4-hydroxyproline" evidence="3">
    <location>
        <position position="347"/>
    </location>
</feature>
<feature type="modified residue" description="4-hydroxyproline" evidence="3">
    <location>
        <position position="356"/>
    </location>
</feature>
<feature type="modified residue" description="4-hydroxyproline" evidence="3">
    <location>
        <position position="362"/>
    </location>
</feature>
<feature type="modified residue" description="4-hydroxyproline" evidence="3">
    <location>
        <position position="368"/>
    </location>
</feature>
<feature type="modified residue" description="4-hydroxyproline" evidence="3">
    <location>
        <position position="377"/>
    </location>
</feature>
<feature type="modified residue" description="4-hydroxyproline" evidence="3">
    <location>
        <position position="380"/>
    </location>
</feature>
<feature type="modified residue" description="4-hydroxyproline" evidence="3">
    <location>
        <position position="389"/>
    </location>
</feature>
<feature type="modified residue" description="4-hydroxyproline" evidence="3">
    <location>
        <position position="398"/>
    </location>
</feature>
<feature type="modified residue" description="4-hydroxyproline" evidence="3">
    <location>
        <position position="404"/>
    </location>
</feature>
<feature type="modified residue" description="4-hydroxyproline" evidence="3">
    <location>
        <position position="416"/>
    </location>
</feature>
<feature type="modified residue" description="4-hydroxyproline" evidence="3">
    <location>
        <position position="425"/>
    </location>
</feature>
<feature type="modified residue" description="4-hydroxyproline" evidence="3">
    <location>
        <position position="434"/>
    </location>
</feature>
<feature type="modified residue" description="4-hydroxyproline" evidence="3">
    <location>
        <position position="437"/>
    </location>
</feature>
<feature type="modified residue" description="4-hydroxyproline" evidence="3">
    <location>
        <position position="455"/>
    </location>
</feature>
<feature type="modified residue" description="4-hydroxyproline" evidence="3">
    <location>
        <position position="472"/>
    </location>
</feature>
<feature type="modified residue" description="4-hydroxyproline" evidence="3">
    <location>
        <position position="478"/>
    </location>
</feature>
<feature type="modified residue" description="4-hydroxyproline" evidence="3">
    <location>
        <position position="484"/>
    </location>
</feature>
<feature type="modified residue" description="4-hydroxyproline" evidence="3">
    <location>
        <position position="490"/>
    </location>
</feature>
<feature type="modified residue" description="4-hydroxyproline" evidence="3">
    <location>
        <position position="496"/>
    </location>
</feature>
<feature type="modified residue" description="4-hydroxyproline" evidence="3">
    <location>
        <position position="502"/>
    </location>
</feature>
<feature type="modified residue" description="4-hydroxyproline" evidence="3">
    <location>
        <position position="514"/>
    </location>
</feature>
<feature type="modified residue" description="4-hydroxyproline" evidence="3">
    <location>
        <position position="523"/>
    </location>
</feature>
<feature type="modified residue" description="4-hydroxyproline" evidence="3">
    <location>
        <position position="534"/>
    </location>
</feature>
<feature type="modified residue" description="4-hydroxyproline" evidence="3">
    <location>
        <position position="546"/>
    </location>
</feature>
<feature type="modified residue" description="4-hydroxyproline" evidence="3">
    <location>
        <position position="549"/>
    </location>
</feature>
<feature type="modified residue" description="4-hydroxyproline" evidence="3">
    <location>
        <position position="555"/>
    </location>
</feature>
<feature type="modified residue" description="4-hydroxyproline" evidence="3">
    <location>
        <position position="561"/>
    </location>
</feature>
<feature type="modified residue" description="4-hydroxyproline" evidence="3">
    <location>
        <position position="570"/>
    </location>
</feature>
<feature type="modified residue" description="5-hydroxylysine" evidence="3">
    <location>
        <position position="582"/>
    </location>
</feature>
<feature type="modified residue" description="4-hydroxyproline" evidence="3">
    <location>
        <position position="588"/>
    </location>
</feature>
<feature type="modified residue" description="4-hydroxyproline" evidence="3">
    <location>
        <position position="603"/>
    </location>
</feature>
<feature type="modified residue" description="Phosphoserine" evidence="2">
    <location>
        <position position="618"/>
    </location>
</feature>
<feature type="modified residue" description="4-hydroxyproline" evidence="3">
    <location>
        <position position="630"/>
    </location>
</feature>
<feature type="modified residue" description="4-hydroxyproline" evidence="3">
    <location>
        <position position="636"/>
    </location>
</feature>
<feature type="modified residue" description="4-hydroxyproline" evidence="3">
    <location>
        <position position="639"/>
    </location>
</feature>
<feature type="modified residue" description="4-hydroxyproline" evidence="3">
    <location>
        <position position="648"/>
    </location>
</feature>
<feature type="modified residue" description="4-hydroxyproline" evidence="3">
    <location>
        <position position="654"/>
    </location>
</feature>
<feature type="modified residue" description="4-hydroxyproline" evidence="3">
    <location>
        <position position="681"/>
    </location>
</feature>
<feature type="modified residue" description="4-hydroxyproline" evidence="3">
    <location>
        <position position="690"/>
    </location>
</feature>
<feature type="modified residue" description="5-hydroxylysine" evidence="3">
    <location>
        <position position="693"/>
    </location>
</feature>
<feature type="modified residue" description="4-hydroxyproline" evidence="3">
    <location>
        <position position="702"/>
    </location>
</feature>
<feature type="modified residue" description="4-hydroxyproline" evidence="3">
    <location>
        <position position="708"/>
    </location>
</feature>
<feature type="modified residue" description="3-hydroxyproline" evidence="4">
    <location>
        <position position="716"/>
    </location>
</feature>
<feature type="modified residue" description="4-hydroxyproline" evidence="4">
    <location>
        <position position="717"/>
    </location>
</feature>
<feature type="modified residue" description="4-hydroxyproline" evidence="4">
    <location>
        <position position="726"/>
    </location>
</feature>
<feature type="modified residue" description="4-hydroxyproline" evidence="4">
    <location>
        <position position="729"/>
    </location>
</feature>
<feature type="modified residue" description="4-hydroxyproline" evidence="3">
    <location>
        <position position="750"/>
    </location>
</feature>
<feature type="modified residue" description="4-hydroxyproline" evidence="3">
    <location>
        <position position="759"/>
    </location>
</feature>
<feature type="modified residue" description="4-hydroxyproline" evidence="3">
    <location>
        <position position="768"/>
    </location>
</feature>
<feature type="modified residue" description="4-hydroxyproline" evidence="3">
    <location>
        <position position="777"/>
    </location>
</feature>
<feature type="modified residue" description="4-hydroxyproline" evidence="3">
    <location>
        <position position="794"/>
    </location>
</feature>
<feature type="modified residue" description="4-hydroxyproline" evidence="3">
    <location>
        <position position="803"/>
    </location>
</feature>
<feature type="modified residue" description="4-hydroxyproline" evidence="3">
    <location>
        <position position="806"/>
    </location>
</feature>
<feature type="modified residue" description="4-hydroxyproline" evidence="3">
    <location>
        <position position="812"/>
    </location>
</feature>
<feature type="modified residue" description="4-hydroxyproline" evidence="3">
    <location>
        <position position="827"/>
    </location>
</feature>
<feature type="modified residue" description="4-hydroxyproline" evidence="3">
    <location>
        <position position="833"/>
    </location>
</feature>
<feature type="modified residue" description="4-hydroxyproline" evidence="3">
    <location>
        <position position="839"/>
    </location>
</feature>
<feature type="modified residue" description="4-hydroxyproline" evidence="3">
    <location>
        <position position="848"/>
    </location>
</feature>
<feature type="modified residue" description="4-hydroxyproline" evidence="3">
    <location>
        <position position="854"/>
    </location>
</feature>
<feature type="modified residue" description="5-hydroxylysine" evidence="3">
    <location>
        <position position="863"/>
    </location>
</feature>
<feature type="modified residue" description="4-hydroxyproline" evidence="3">
    <location>
        <position position="874"/>
    </location>
</feature>
<feature type="modified residue" description="4-hydroxyproline" evidence="3">
    <location>
        <position position="877"/>
    </location>
</feature>
<feature type="modified residue" description="4-hydroxyproline" evidence="3">
    <location>
        <position position="880"/>
    </location>
</feature>
<feature type="modified residue" description="5-hydroxylysine" evidence="3">
    <location>
        <position position="925"/>
    </location>
</feature>
<feature type="modified residue" description="5-hydroxylysine; alternate" evidence="3">
    <location>
        <position position="937"/>
    </location>
</feature>
<feature type="modified residue" description="4-hydroxyproline" evidence="3">
    <location>
        <position position="952"/>
    </location>
</feature>
<feature type="modified residue" description="4-hydroxyproline" evidence="3">
    <location>
        <position position="955"/>
    </location>
</feature>
<feature type="modified residue" description="4-hydroxyproline" evidence="3">
    <location>
        <position position="973"/>
    </location>
</feature>
<feature type="modified residue" description="4-hydroxyproline" evidence="4">
    <location>
        <position position="988"/>
    </location>
</feature>
<feature type="modified residue" description="3-hydroxyproline" evidence="4">
    <location>
        <position position="993"/>
    </location>
</feature>
<feature type="modified residue" description="4-hydroxyproline" evidence="4">
    <location>
        <position position="994"/>
    </location>
</feature>
<feature type="modified residue" description="3-hydroxyproline" evidence="4">
    <location>
        <position position="1008"/>
    </location>
</feature>
<feature type="modified residue" description="4-hydroxyproline" evidence="4">
    <location>
        <position position="1009"/>
    </location>
</feature>
<feature type="modified residue" description="3-hydroxyproline" evidence="4">
    <location>
        <position position="1011"/>
    </location>
</feature>
<feature type="modified residue" description="4-hydroxyproline" evidence="4">
    <location>
        <position position="1012"/>
    </location>
</feature>
<feature type="modified residue" description="3-hydroxyproline" evidence="4">
    <location>
        <position position="1014"/>
    </location>
</feature>
<feature type="modified residue" description="4-hydroxyproline" evidence="4">
    <location>
        <position position="1015"/>
    </location>
</feature>
<feature type="modified residue" description="4-hydroxyproline" evidence="4">
    <location>
        <position position="1018"/>
    </location>
</feature>
<feature type="modified residue" description="4-hydroxyproline" evidence="4">
    <location>
        <position position="1021"/>
    </location>
</feature>
<feature type="glycosylation site" description="O-linked (Gal...) hydroxylysine; alternate" evidence="1">
    <location>
        <position position="98"/>
    </location>
</feature>
<feature type="glycosylation site" description="O-linked (Gal...) hydroxylysine; alternate" evidence="3">
    <location>
        <position position="937"/>
    </location>
</feature>
<feature type="unsure residue" description="I or L" evidence="6">
    <location>
        <position position="8"/>
    </location>
</feature>
<feature type="unsure residue" description="L or I" evidence="6">
    <location>
        <position position="22"/>
    </location>
</feature>
<feature type="unsure residue" description="L or I" evidence="6">
    <location>
        <position position="88"/>
    </location>
</feature>
<feature type="unsure residue" description="L or I" evidence="6">
    <location>
        <position position="94"/>
    </location>
</feature>
<feature type="unsure residue" description="L or I" evidence="6">
    <location>
        <position position="106"/>
    </location>
</feature>
<feature type="unsure residue" description="L or I" evidence="6">
    <location>
        <position position="139"/>
    </location>
</feature>
<feature type="unsure residue" description="I or L" evidence="6">
    <location>
        <position position="238"/>
    </location>
</feature>
<feature type="unsure residue" description="I or L" evidence="6">
    <location>
        <position position="289"/>
    </location>
</feature>
<feature type="unsure residue" description="L or I" evidence="6">
    <location>
        <position position="313"/>
    </location>
</feature>
<feature type="unsure residue" description="I or L" evidence="6">
    <location>
        <position position="334"/>
    </location>
</feature>
<feature type="unsure residue" description="L or I" evidence="6">
    <location>
        <position position="367"/>
    </location>
</feature>
<feature type="unsure residue" description="L or I" evidence="6">
    <location>
        <position position="373"/>
    </location>
</feature>
<feature type="unsure residue" description="L or I" evidence="6">
    <location>
        <position position="477"/>
    </location>
</feature>
<feature type="unsure residue" description="L or I" evidence="6">
    <location>
        <position position="499"/>
    </location>
</feature>
<feature type="unsure residue" description="L or I" evidence="6">
    <location>
        <position position="557"/>
    </location>
</feature>
<feature type="unsure residue" description="L or I" evidence="6">
    <location>
        <position position="569"/>
    </location>
</feature>
<feature type="unsure residue" description="L or I" evidence="6">
    <location>
        <position position="596"/>
    </location>
</feature>
<feature type="unsure residue" description="I or L" evidence="6">
    <location>
        <position position="600"/>
    </location>
</feature>
<feature type="unsure residue" description="I or L" evidence="6">
    <location>
        <position position="684"/>
    </location>
</feature>
<feature type="unsure residue" description="I or L" evidence="6">
    <location>
        <position position="785"/>
    </location>
</feature>
<feature type="unsure residue" description="L or I" evidence="6">
    <location>
        <position position="793"/>
    </location>
</feature>
<feature type="unsure residue" description="L or I" evidence="6">
    <location>
        <position position="805"/>
    </location>
</feature>
<feature type="unsure residue" description="L or I" evidence="6">
    <location>
        <position position="835"/>
    </location>
</feature>
<feature type="unsure residue" description="I or L" evidence="6">
    <location>
        <position position="936"/>
    </location>
</feature>
<feature type="unsure residue" description="L or I" evidence="6">
    <location>
        <position position="945"/>
    </location>
</feature>
<feature type="unsure residue" description="L or I" evidence="6">
    <location>
        <position position="984"/>
    </location>
</feature>
<feature type="unsure residue" description="L or I" evidence="6">
    <location>
        <position position="987"/>
    </location>
</feature>
<feature type="unsure residue" description="I or L" evidence="6">
    <location>
        <position position="991"/>
    </location>
</feature>
<feature type="non-consecutive residues" evidence="7">
    <location>
        <begin position="471"/>
        <end position="472"/>
    </location>
</feature>
<feature type="non-consecutive residues" evidence="7">
    <location>
        <begin position="530"/>
        <end position="531"/>
    </location>
</feature>
<feature type="non-consecutive residues" evidence="7">
    <location>
        <begin position="785"/>
        <end position="786"/>
    </location>
</feature>
<feature type="non-consecutive residues" evidence="7">
    <location>
        <begin position="871"/>
        <end position="872"/>
    </location>
</feature>
<feature type="non-terminal residue" evidence="7">
    <location>
        <position position="1"/>
    </location>
</feature>
<feature type="non-terminal residue" evidence="7">
    <location>
        <position position="1021"/>
    </location>
</feature>
<proteinExistence type="evidence at protein level"/>
<keyword id="KW-0903">Direct protein sequencing</keyword>
<keyword id="KW-0952">Extinct organism protein</keyword>
<keyword id="KW-0272">Extracellular matrix</keyword>
<keyword id="KW-0325">Glycoprotein</keyword>
<keyword id="KW-0379">Hydroxylation</keyword>
<keyword id="KW-0597">Phosphoprotein</keyword>
<keyword id="KW-0964">Secreted</keyword>